<reference key="1">
    <citation type="journal article" date="1994" name="Development">
        <title>The Caenorhabditis elegans NK-2 class homeoprotein CEH-22 is involved in combinatorial activation of gene expression in pharyngeal muscle.</title>
        <authorList>
            <person name="Okkema P.G."/>
            <person name="Fire A."/>
        </authorList>
    </citation>
    <scope>NUCLEOTIDE SEQUENCE [GENOMIC DNA / MRNA]</scope>
    <scope>DEVELOPMENTAL STAGE</scope>
    <source>
        <strain>Bristol N2</strain>
    </source>
</reference>
<reference key="2">
    <citation type="journal article" date="1998" name="Science">
        <title>Genome sequence of the nematode C. elegans: a platform for investigating biology.</title>
        <authorList>
            <consortium name="The C. elegans sequencing consortium"/>
        </authorList>
    </citation>
    <scope>NUCLEOTIDE SEQUENCE [LARGE SCALE GENOMIC DNA]</scope>
    <source>
        <strain>Bristol N2</strain>
    </source>
</reference>
<reference key="3">
    <citation type="journal article" date="2014" name="Development">
        <title>HTZ-1/H2A.z and MYS-1/MYST HAT act redundantly to maintain cell fates in somatic gonadal cells through repression of ceh-22 in C. elegans.</title>
        <authorList>
            <person name="Shibata Y."/>
            <person name="Sawa H."/>
            <person name="Nishiwaki K."/>
        </authorList>
    </citation>
    <scope>FUNCTION (ISOFORM B)</scope>
    <scope>DEVELOPMENTAL STAGE</scope>
    <scope>DOMAIN</scope>
    <scope>DISRUPTION PHENOTYPE</scope>
</reference>
<accession>P41936</accession>
<accession>A1EHR3</accession>
<accession>A1EHR4</accession>
<accession>Q19908</accession>
<organism>
    <name type="scientific">Caenorhabditis elegans</name>
    <dbReference type="NCBI Taxonomy" id="6239"/>
    <lineage>
        <taxon>Eukaryota</taxon>
        <taxon>Metazoa</taxon>
        <taxon>Ecdysozoa</taxon>
        <taxon>Nematoda</taxon>
        <taxon>Chromadorea</taxon>
        <taxon>Rhabditida</taxon>
        <taxon>Rhabditina</taxon>
        <taxon>Rhabditomorpha</taxon>
        <taxon>Rhabditoidea</taxon>
        <taxon>Rhabditidae</taxon>
        <taxon>Peloderinae</taxon>
        <taxon>Caenorhabditis</taxon>
    </lineage>
</organism>
<sequence length="346" mass="37511">MFNVSALRAATPSIASVSSVASPSEQHGLSTSVGVGVNDTTSRTGDGGAASSASSASAAPQQQSQSALHNKLEAKWDTLLPTDTNLQCSTWPDSIPLLAGYSATPTFSFDPCTYGSYDPSAYFASNGIAGSMYTLPDQFPRSENDMLDNSNTSNGNKSDKDGIKLEDEDEILEDEENDEEDDGTGKRKKRKRRVLFTKAQTYELERRFRSQKYLSAPEREALAMQIRLTPTQVKIWFQNHRYKTKKSHTDKPINAALLTTMPNAFSSQSTAASFPTRAMPIPMLVRDSSARSSDISSTSPYTVAFGSANSGYLPTPSAYLPATSGYFSNGPSAASSYMTNTQWWPS</sequence>
<gene>
    <name type="primary">ceh-22</name>
    <name type="ORF">F29F11.5</name>
</gene>
<protein>
    <recommendedName>
        <fullName>Homeobox protein ceh-22</fullName>
    </recommendedName>
</protein>
<keyword id="KW-0025">Alternative splicing</keyword>
<keyword id="KW-0217">Developmental protein</keyword>
<keyword id="KW-0238">DNA-binding</keyword>
<keyword id="KW-0371">Homeobox</keyword>
<keyword id="KW-0539">Nucleus</keyword>
<keyword id="KW-1185">Reference proteome</keyword>
<name>HM22_CAEEL</name>
<dbReference type="EMBL" id="U10080">
    <property type="protein sequence ID" value="AAA20840.1"/>
    <property type="molecule type" value="mRNA"/>
</dbReference>
<dbReference type="EMBL" id="U10081">
    <property type="protein sequence ID" value="AAA20841.1"/>
    <property type="molecule type" value="Genomic_DNA"/>
</dbReference>
<dbReference type="EMBL" id="Z73974">
    <property type="protein sequence ID" value="CAA98272.1"/>
    <property type="molecule type" value="Genomic_DNA"/>
</dbReference>
<dbReference type="EMBL" id="BX284605">
    <property type="protein sequence ID" value="CAL90891.1"/>
    <property type="molecule type" value="Genomic_DNA"/>
</dbReference>
<dbReference type="EMBL" id="BX284605">
    <property type="protein sequence ID" value="CAL90892.1"/>
    <property type="molecule type" value="Genomic_DNA"/>
</dbReference>
<dbReference type="PIR" id="T21552">
    <property type="entry name" value="T21552"/>
</dbReference>
<dbReference type="RefSeq" id="NP_001076742.1">
    <property type="nucleotide sequence ID" value="NM_001083273.2"/>
</dbReference>
<dbReference type="RefSeq" id="NP_001076743.1">
    <molecule id="P41936-3"/>
    <property type="nucleotide sequence ID" value="NM_001083274.3"/>
</dbReference>
<dbReference type="RefSeq" id="NP_001076744.1">
    <molecule id="P41936-2"/>
    <property type="nucleotide sequence ID" value="NM_001083275.4"/>
</dbReference>
<dbReference type="SMR" id="P41936"/>
<dbReference type="BioGRID" id="44514">
    <property type="interactions" value="8"/>
</dbReference>
<dbReference type="FunCoup" id="P41936">
    <property type="interactions" value="210"/>
</dbReference>
<dbReference type="IntAct" id="P41936">
    <property type="interactions" value="8"/>
</dbReference>
<dbReference type="STRING" id="6239.F29F11.5d.1"/>
<dbReference type="PaxDb" id="6239-F29F11.5a"/>
<dbReference type="PeptideAtlas" id="P41936"/>
<dbReference type="EnsemblMetazoa" id="F29F11.5a.1">
    <property type="protein sequence ID" value="F29F11.5a.1"/>
    <property type="gene ID" value="WBGene00000445"/>
</dbReference>
<dbReference type="EnsemblMetazoa" id="F29F11.5b.1">
    <molecule id="P41936-3"/>
    <property type="protein sequence ID" value="F29F11.5b.1"/>
    <property type="gene ID" value="WBGene00000445"/>
</dbReference>
<dbReference type="EnsemblMetazoa" id="F29F11.5c.1">
    <molecule id="P41936-2"/>
    <property type="protein sequence ID" value="F29F11.5c.1"/>
    <property type="gene ID" value="WBGene00000445"/>
</dbReference>
<dbReference type="GeneID" id="179485"/>
<dbReference type="KEGG" id="cel:CELE_F29F11.5"/>
<dbReference type="UCSC" id="F29F11.5a">
    <property type="organism name" value="c. elegans"/>
</dbReference>
<dbReference type="AGR" id="WB:WBGene00000445"/>
<dbReference type="CTD" id="179485"/>
<dbReference type="WormBase" id="F29F11.5a">
    <property type="protein sequence ID" value="CE05771"/>
    <property type="gene ID" value="WBGene00000445"/>
    <property type="gene designation" value="ceh-22"/>
</dbReference>
<dbReference type="WormBase" id="F29F11.5b">
    <molecule id="P41936-3"/>
    <property type="protein sequence ID" value="CE40611"/>
    <property type="gene ID" value="WBGene00000445"/>
    <property type="gene designation" value="ceh-22"/>
</dbReference>
<dbReference type="WormBase" id="F29F11.5c">
    <molecule id="P41936-2"/>
    <property type="protein sequence ID" value="CE40612"/>
    <property type="gene ID" value="WBGene00000445"/>
    <property type="gene designation" value="ceh-22"/>
</dbReference>
<dbReference type="eggNOG" id="KOG0842">
    <property type="taxonomic scope" value="Eukaryota"/>
</dbReference>
<dbReference type="GeneTree" id="ENSGT00940000166323"/>
<dbReference type="HOGENOM" id="CLU_802231_0_0_1"/>
<dbReference type="InParanoid" id="P41936"/>
<dbReference type="OrthoDB" id="3137333at2759"/>
<dbReference type="SignaLink" id="P41936"/>
<dbReference type="PRO" id="PR:P41936"/>
<dbReference type="Proteomes" id="UP000001940">
    <property type="component" value="Chromosome V"/>
</dbReference>
<dbReference type="Bgee" id="WBGene00000445">
    <property type="expression patterns" value="Expressed in pharyngeal muscle cell (C elegans) and 3 other cell types or tissues"/>
</dbReference>
<dbReference type="ExpressionAtlas" id="P41936">
    <property type="expression patterns" value="baseline and differential"/>
</dbReference>
<dbReference type="GO" id="GO:0005634">
    <property type="term" value="C:nucleus"/>
    <property type="evidence" value="ECO:0000314"/>
    <property type="project" value="WormBase"/>
</dbReference>
<dbReference type="GO" id="GO:0000981">
    <property type="term" value="F:DNA-binding transcription factor activity, RNA polymerase II-specific"/>
    <property type="evidence" value="ECO:0000318"/>
    <property type="project" value="GO_Central"/>
</dbReference>
<dbReference type="GO" id="GO:0000978">
    <property type="term" value="F:RNA polymerase II cis-regulatory region sequence-specific DNA binding"/>
    <property type="evidence" value="ECO:0000318"/>
    <property type="project" value="GO_Central"/>
</dbReference>
<dbReference type="GO" id="GO:0043565">
    <property type="term" value="F:sequence-specific DNA binding"/>
    <property type="evidence" value="ECO:0000314"/>
    <property type="project" value="WormBase"/>
</dbReference>
<dbReference type="GO" id="GO:0030154">
    <property type="term" value="P:cell differentiation"/>
    <property type="evidence" value="ECO:0000318"/>
    <property type="project" value="GO_Central"/>
</dbReference>
<dbReference type="GO" id="GO:0001708">
    <property type="term" value="P:cell fate specification"/>
    <property type="evidence" value="ECO:0000314"/>
    <property type="project" value="UniProtKB"/>
</dbReference>
<dbReference type="GO" id="GO:0035262">
    <property type="term" value="P:gonad morphogenesis"/>
    <property type="evidence" value="ECO:0000315"/>
    <property type="project" value="UniProtKB"/>
</dbReference>
<dbReference type="GO" id="GO:0160096">
    <property type="term" value="P:nematode pharyngeal muscle development"/>
    <property type="evidence" value="ECO:0000315"/>
    <property type="project" value="WormBase"/>
</dbReference>
<dbReference type="GO" id="GO:0045944">
    <property type="term" value="P:positive regulation of transcription by RNA polymerase II"/>
    <property type="evidence" value="ECO:0000315"/>
    <property type="project" value="WormBase"/>
</dbReference>
<dbReference type="GO" id="GO:0006357">
    <property type="term" value="P:regulation of transcription by RNA polymerase II"/>
    <property type="evidence" value="ECO:0000318"/>
    <property type="project" value="GO_Central"/>
</dbReference>
<dbReference type="CDD" id="cd00086">
    <property type="entry name" value="homeodomain"/>
    <property type="match status" value="1"/>
</dbReference>
<dbReference type="FunFam" id="1.10.10.60:FF:000101">
    <property type="entry name" value="NK2 homeobox 8"/>
    <property type="match status" value="1"/>
</dbReference>
<dbReference type="Gene3D" id="1.10.10.60">
    <property type="entry name" value="Homeodomain-like"/>
    <property type="match status" value="1"/>
</dbReference>
<dbReference type="InterPro" id="IPR001356">
    <property type="entry name" value="HD"/>
</dbReference>
<dbReference type="InterPro" id="IPR020479">
    <property type="entry name" value="HD_metazoa"/>
</dbReference>
<dbReference type="InterPro" id="IPR017970">
    <property type="entry name" value="Homeobox_CS"/>
</dbReference>
<dbReference type="InterPro" id="IPR050394">
    <property type="entry name" value="Homeobox_NK-like"/>
</dbReference>
<dbReference type="InterPro" id="IPR009057">
    <property type="entry name" value="Homeodomain-like_sf"/>
</dbReference>
<dbReference type="PANTHER" id="PTHR24340">
    <property type="entry name" value="HOMEOBOX PROTEIN NKX"/>
    <property type="match status" value="1"/>
</dbReference>
<dbReference type="PANTHER" id="PTHR24340:SF82">
    <property type="entry name" value="HOMEOBOX PROTEIN VND"/>
    <property type="match status" value="1"/>
</dbReference>
<dbReference type="Pfam" id="PF00046">
    <property type="entry name" value="Homeodomain"/>
    <property type="match status" value="1"/>
</dbReference>
<dbReference type="PRINTS" id="PR00024">
    <property type="entry name" value="HOMEOBOX"/>
</dbReference>
<dbReference type="SMART" id="SM00389">
    <property type="entry name" value="HOX"/>
    <property type="match status" value="1"/>
</dbReference>
<dbReference type="SUPFAM" id="SSF46689">
    <property type="entry name" value="Homeodomain-like"/>
    <property type="match status" value="1"/>
</dbReference>
<dbReference type="PROSITE" id="PS00027">
    <property type="entry name" value="HOMEOBOX_1"/>
    <property type="match status" value="1"/>
</dbReference>
<dbReference type="PROSITE" id="PS50071">
    <property type="entry name" value="HOMEOBOX_2"/>
    <property type="match status" value="1"/>
</dbReference>
<proteinExistence type="evidence at transcript level"/>
<evidence type="ECO:0000255" key="1">
    <source>
        <dbReference type="PROSITE-ProRule" id="PRU00108"/>
    </source>
</evidence>
<evidence type="ECO:0000256" key="2">
    <source>
        <dbReference type="SAM" id="MobiDB-lite"/>
    </source>
</evidence>
<evidence type="ECO:0000269" key="3">
    <source>
    </source>
</evidence>
<evidence type="ECO:0000269" key="4">
    <source>
    </source>
</evidence>
<evidence type="ECO:0000305" key="5"/>
<evidence type="ECO:0000312" key="6">
    <source>
        <dbReference type="WormBase" id="F29F11.5a"/>
    </source>
</evidence>
<evidence type="ECO:0000312" key="7">
    <source>
        <dbReference type="WormBase" id="F29F11.5b"/>
    </source>
</evidence>
<evidence type="ECO:0000312" key="8">
    <source>
        <dbReference type="WormBase" id="F29F11.5c"/>
    </source>
</evidence>
<comment type="function">
    <text>Involved in combinatorial activation of gene expression in pharyngeal muscle. Specifically binds a site necessary for activity of the B subelement of myo-2 enhancer.</text>
</comment>
<comment type="function">
    <molecule>Isoform b</molecule>
    <text evidence="3">Regulates distal tip cell fate.</text>
</comment>
<comment type="subcellular location">
    <subcellularLocation>
        <location>Nucleus</location>
    </subcellularLocation>
</comment>
<comment type="alternative products">
    <event type="alternative splicing"/>
    <isoform>
        <id>P41936-1</id>
        <name evidence="6">a</name>
        <sequence type="displayed"/>
    </isoform>
    <isoform>
        <id>P41936-2</id>
        <name evidence="7">b</name>
        <sequence type="described" ref="VSP_057963"/>
    </isoform>
    <isoform>
        <id>P41936-3</id>
        <name evidence="8">c</name>
        <sequence type="described" ref="VSP_057962"/>
    </isoform>
</comment>
<comment type="developmental stage">
    <text evidence="3 4">First expressed prior to myogenic differentiation, expression continues throughout embryonic and larval development and is most abundant in embryos. It is present in decreasing amounts throughout development and a low level is found in the adults (PubMed:7925019). Expressed in distal tip cells (DTC) until L4 larval stage (PubMed:24346701).</text>
</comment>
<comment type="domain">
    <text evidence="3">The homeobox domain is required for the induction of distal tip cell fate.</text>
</comment>
<comment type="disruption phenotype">
    <text evidence="3">RNAi-mediated knockdown in a bet-1 mutant background prevents the formation of extra distal tip cells (DTC) during gonad development.</text>
</comment>
<comment type="similarity">
    <text evidence="5">Belongs to the NK-2 homeobox family.</text>
</comment>
<feature type="chain" id="PRO_0000048992" description="Homeobox protein ceh-22">
    <location>
        <begin position="1"/>
        <end position="346"/>
    </location>
</feature>
<feature type="DNA-binding region" description="Homeobox" evidence="1">
    <location>
        <begin position="189"/>
        <end position="248"/>
    </location>
</feature>
<feature type="region of interest" description="Disordered" evidence="2">
    <location>
        <begin position="1"/>
        <end position="68"/>
    </location>
</feature>
<feature type="region of interest" description="Disordered" evidence="2">
    <location>
        <begin position="135"/>
        <end position="190"/>
    </location>
</feature>
<feature type="compositionally biased region" description="Low complexity" evidence="2">
    <location>
        <begin position="9"/>
        <end position="24"/>
    </location>
</feature>
<feature type="compositionally biased region" description="Polar residues" evidence="2">
    <location>
        <begin position="25"/>
        <end position="44"/>
    </location>
</feature>
<feature type="compositionally biased region" description="Low complexity" evidence="2">
    <location>
        <begin position="49"/>
        <end position="67"/>
    </location>
</feature>
<feature type="compositionally biased region" description="Polar residues" evidence="2">
    <location>
        <begin position="147"/>
        <end position="156"/>
    </location>
</feature>
<feature type="compositionally biased region" description="Acidic residues" evidence="2">
    <location>
        <begin position="166"/>
        <end position="182"/>
    </location>
</feature>
<feature type="splice variant" id="VSP_057962" description="In isoform c." evidence="5">
    <location>
        <begin position="1"/>
        <end position="131"/>
    </location>
</feature>
<feature type="splice variant" id="VSP_057963" description="In isoform b." evidence="5">
    <original>MFNVSALRAATPSIASVSSVASPSEQHGLSTSVGVGVNDTTSRTGDGGAASSASSASAAPQQQSQSALHNK</original>
    <variation>MQTYAFSR</variation>
    <location>
        <begin position="1"/>
        <end position="71"/>
    </location>
</feature>
<feature type="sequence conflict" description="In Ref. 2; CAA98272." evidence="5" ref="2">
    <original>R</original>
    <variation>A</variation>
    <location>
        <position position="8"/>
    </location>
</feature>